<proteinExistence type="evidence at transcript level"/>
<name>SH3R1_BOVIN</name>
<evidence type="ECO:0000250" key="1"/>
<evidence type="ECO:0000250" key="2">
    <source>
        <dbReference type="UniProtKB" id="Q69ZI1"/>
    </source>
</evidence>
<evidence type="ECO:0000250" key="3">
    <source>
        <dbReference type="UniProtKB" id="Q71F54"/>
    </source>
</evidence>
<evidence type="ECO:0000250" key="4">
    <source>
        <dbReference type="UniProtKB" id="Q7Z6J0"/>
    </source>
</evidence>
<evidence type="ECO:0000255" key="5">
    <source>
        <dbReference type="PROSITE-ProRule" id="PRU00175"/>
    </source>
</evidence>
<evidence type="ECO:0000255" key="6">
    <source>
        <dbReference type="PROSITE-ProRule" id="PRU00192"/>
    </source>
</evidence>
<evidence type="ECO:0000256" key="7">
    <source>
        <dbReference type="SAM" id="MobiDB-lite"/>
    </source>
</evidence>
<evidence type="ECO:0000305" key="8"/>
<comment type="function">
    <text evidence="2 4">Has E3 ubiquitin-protein ligase activity. In the absence of an external substrate, it can catalyze self-ubiquitination. Stimulates ubiquitination of potassium channel KCNJ1, enhancing it's dynamin-dependent and clathrin-independent endocytosis. Acts as a scaffold protein that coordinates with MAPK8IP1/JIP1 in organizing different components of the JNK pathway, including RAC1 or RAC2, MAP3K11/MLK3 or MAP3K7/TAK1, MAP2K7/MKK7, MAPK8/JNK1 and/or MAPK9/JNK2 into a functional multiprotein complex to ensure the effective activation of the JNK signaling pathway. Regulates the differentiation of CD4(+) and CD8(+) T-cells and promotes T-helper 1 (Th1) cell differentiation. Regulates the activation of MAPK8/JNK1 and MAPK9/JNK2 in CD4(+) T-cells and the activation of MAPK8/JNK1 in CD8(+) T-cells. Plays a crucial role in the migration of neocortical neurons in the developing brain. Controls proper cortical neuronal migration and the formation of proximal cytoplasmic dilation in the leading process (PCDLP) in migratory neocortical neurons by regulating the proper localization of activated RAC1 and F-actin assembly.</text>
</comment>
<comment type="catalytic activity">
    <reaction evidence="4">
        <text>S-ubiquitinyl-[E2 ubiquitin-conjugating enzyme]-L-cysteine + [acceptor protein]-L-lysine = [E2 ubiquitin-conjugating enzyme]-L-cysteine + N(6)-ubiquitinyl-[acceptor protein]-L-lysine.</text>
        <dbReference type="EC" id="2.3.2.27"/>
    </reaction>
</comment>
<comment type="pathway">
    <text>Protein modification; protein ubiquitination.</text>
</comment>
<comment type="subunit">
    <text evidence="2 3 4">Interacts with RAC1; in a GTP-dependent manner. Interacts with MAP3K10/MLK2 and MAP3K11/MLK3. Interacts with MAPK8IP; this interaction leads to the PJAC complex (POSH-JIP or SH3RF1/MAPK8IP apoptotic complex) with a 1:1 ratio. Interacts with SIAH1. Interacts with HERP1. Probably part of a signaling complex that may contain SH3RF1, MAPK8IP, DLK1, MAP2K4/MKK4, MAP2K7/MKK7, MAPK8/JNK1, MAPK9/JNK2, AKT1 and AKT2. Found in a complex with RAC2, MAP3K7/TAK1, MAP2K7/MKK7, MAPK8IP1/JIP1, MAPK8/JNK1 and MAPK9/JNK2. Found in a complex with RAC1, MAP3K11/MLK3, MAP2K7/MKK7, MAPK8IP1/JIP1 and MAPK8/JNK1. Interacts with SH3RF2.</text>
</comment>
<comment type="subcellular location">
    <subcellularLocation>
        <location evidence="3">Cytoplasm</location>
        <location evidence="3">Perinuclear region</location>
    </subcellularLocation>
    <subcellularLocation>
        <location evidence="2">Cell projection</location>
        <location evidence="2">Lamellipodium</location>
    </subcellularLocation>
    <subcellularLocation>
        <location evidence="2">Golgi apparatus</location>
        <location evidence="2">trans-Golgi network</location>
    </subcellularLocation>
    <text evidence="2 4">Colocalizes, with AKT2, in lamellipodia. Colocalizes, with HERP1, in trans-Golgi network.</text>
</comment>
<comment type="domain">
    <text evidence="4">The RING finger domain is required for ubiquitin ligase activity and autoubiquitination.</text>
</comment>
<comment type="PTM">
    <text evidence="4">Phosphorylated at Ser-304 by AKT1 and AKT2. When phosphorylated, it has reduced ability to bind Rac.</text>
</comment>
<comment type="PTM">
    <text evidence="3">Autoubiquitinated. Ubiquitinated by SH3RF2, leading to proteasome-mediated degradation.</text>
</comment>
<comment type="similarity">
    <text evidence="8">Belongs to the SH3RF family.</text>
</comment>
<sequence length="840" mass="87592">MDESALLDLLECPVCLERLDASAKVLPCQHTFCKRCLLGIVGSRNELRCPECRTLVGSGVEQLPSNILLVRLLDGIKQRPWKPGPVGGSGTNGTSALRAQSSAVVTCSPKDGPSSQGGPQPRAQAWSPPVRGIPQLPCAKALYNYEGKEPGDLKFSKGDIIVLRRQVDENWYHGEVGGVHGFFPTNFVQIIKPLPQPPPQCKALYDFEVKDKEADKDCLPFAKDDVLTVIRRVDENWAEGMLADKIGIFPISYVEFNSAAKQLIEWDQPPGPGVAAGEGALATTPSSTTTKQPDGKKNTKKRHSFTSLSMASKASQAAQQRHSMEISPPVLISSSNPAAAARIGELAGLSCSAPSQVHISTTGLIVTPPPSSPVTTGPSFTFPAEAPYPAALATLNPPLPPPPLQAATPTGTAVAAAAGMGPRPTAGPTDQTTHPRPQPRPSVYVAIYPYTPRKEDELELRKGEMFLVFERCQDGWFKGTSMHTSKIGVFPGNYVAPVTRAVTSASQGKVPMLTTGPASRGGVLANPPSTGGPAQKPPGNGVAGGPGVPTAVVSAAHVQTSPQAKVLLHASGQMTVNQARSAARTVSAHSQERPTAAVTPIQVQSTPGQSHHPLVSPQPPAPLGPPAHAAASGLGRVGGPLACATAPASIPAASLEPEPSSRPATLLPGTPTSPDSGSAARPDKDGKKEKKGLLKLLSGASTKRKPRGSPPASPTLDAELGAELSCGPPGPPCACPGPCDGDTMAPGPQRRASSLDSAPVAPPPRQPCSSLGPAASEVRPAVCERHRVVVSYPPQSEAELELKEGDIVFVHKKREDGWFKGTLQRNGKTGLFPGSFVENI</sequence>
<organism>
    <name type="scientific">Bos taurus</name>
    <name type="common">Bovine</name>
    <dbReference type="NCBI Taxonomy" id="9913"/>
    <lineage>
        <taxon>Eukaryota</taxon>
        <taxon>Metazoa</taxon>
        <taxon>Chordata</taxon>
        <taxon>Craniata</taxon>
        <taxon>Vertebrata</taxon>
        <taxon>Euteleostomi</taxon>
        <taxon>Mammalia</taxon>
        <taxon>Eutheria</taxon>
        <taxon>Laurasiatheria</taxon>
        <taxon>Artiodactyla</taxon>
        <taxon>Ruminantia</taxon>
        <taxon>Pecora</taxon>
        <taxon>Bovidae</taxon>
        <taxon>Bovinae</taxon>
        <taxon>Bos</taxon>
    </lineage>
</organism>
<feature type="chain" id="PRO_0000334150" description="E3 ubiquitin-protein ligase SH3RF1">
    <location>
        <begin position="1"/>
        <end position="840"/>
    </location>
</feature>
<feature type="domain" description="SH3 1" evidence="6">
    <location>
        <begin position="134"/>
        <end position="193"/>
    </location>
</feature>
<feature type="domain" description="SH3 2" evidence="6">
    <location>
        <begin position="196"/>
        <end position="259"/>
    </location>
</feature>
<feature type="domain" description="SH3 3" evidence="6">
    <location>
        <begin position="439"/>
        <end position="500"/>
    </location>
</feature>
<feature type="domain" description="SH3 4" evidence="6">
    <location>
        <begin position="781"/>
        <end position="840"/>
    </location>
</feature>
<feature type="zinc finger region" description="RING-type" evidence="5">
    <location>
        <begin position="12"/>
        <end position="53"/>
    </location>
</feature>
<feature type="region of interest" description="Disordered" evidence="7">
    <location>
        <begin position="105"/>
        <end position="129"/>
    </location>
</feature>
<feature type="region of interest" description="Disordered" evidence="7">
    <location>
        <begin position="267"/>
        <end position="324"/>
    </location>
</feature>
<feature type="region of interest" description="Interaction with RAC1" evidence="4">
    <location>
        <begin position="292"/>
        <end position="362"/>
    </location>
</feature>
<feature type="region of interest" description="Disordered" evidence="7">
    <location>
        <begin position="394"/>
        <end position="442"/>
    </location>
</feature>
<feature type="region of interest" description="Interaction with AKT2" evidence="1">
    <location>
        <begin position="434"/>
        <end position="537"/>
    </location>
</feature>
<feature type="region of interest" description="Disordered" evidence="7">
    <location>
        <begin position="516"/>
        <end position="545"/>
    </location>
</feature>
<feature type="region of interest" description="Disordered" evidence="7">
    <location>
        <begin position="578"/>
        <end position="633"/>
    </location>
</feature>
<feature type="region of interest" description="Disordered" evidence="7">
    <location>
        <begin position="652"/>
        <end position="723"/>
    </location>
</feature>
<feature type="region of interest" description="Disordered" evidence="7">
    <location>
        <begin position="744"/>
        <end position="773"/>
    </location>
</feature>
<feature type="compositionally biased region" description="Low complexity" evidence="7">
    <location>
        <begin position="273"/>
        <end position="282"/>
    </location>
</feature>
<feature type="compositionally biased region" description="Polar residues" evidence="7">
    <location>
        <begin position="283"/>
        <end position="292"/>
    </location>
</feature>
<feature type="compositionally biased region" description="Low complexity" evidence="7">
    <location>
        <begin position="307"/>
        <end position="320"/>
    </location>
</feature>
<feature type="compositionally biased region" description="Low complexity" evidence="7">
    <location>
        <begin position="405"/>
        <end position="424"/>
    </location>
</feature>
<feature type="compositionally biased region" description="Pro residues" evidence="7">
    <location>
        <begin position="616"/>
        <end position="625"/>
    </location>
</feature>
<feature type="compositionally biased region" description="Basic and acidic residues" evidence="7">
    <location>
        <begin position="681"/>
        <end position="692"/>
    </location>
</feature>
<feature type="modified residue" description="Phosphoserine" evidence="4">
    <location>
        <position position="304"/>
    </location>
</feature>
<feature type="modified residue" description="Phosphoserine" evidence="2">
    <location>
        <position position="709"/>
    </location>
</feature>
<reference key="1">
    <citation type="submission" date="2007-04" db="EMBL/GenBank/DDBJ databases">
        <authorList>
            <consortium name="NIH - Mammalian Gene Collection (MGC) project"/>
        </authorList>
    </citation>
    <scope>NUCLEOTIDE SEQUENCE [LARGE SCALE MRNA]</scope>
    <source>
        <strain>Hereford</strain>
        <tissue>Hypothalamus</tissue>
    </source>
</reference>
<dbReference type="EC" id="2.3.2.27" evidence="4"/>
<dbReference type="EMBL" id="BC140539">
    <property type="protein sequence ID" value="AAI40540.1"/>
    <property type="molecule type" value="mRNA"/>
</dbReference>
<dbReference type="RefSeq" id="NP_001091534.1">
    <property type="nucleotide sequence ID" value="NM_001098065.1"/>
</dbReference>
<dbReference type="RefSeq" id="XP_024851535.1">
    <property type="nucleotide sequence ID" value="XM_024995767.2"/>
</dbReference>
<dbReference type="SMR" id="A5D7F8"/>
<dbReference type="FunCoup" id="A5D7F8">
    <property type="interactions" value="935"/>
</dbReference>
<dbReference type="STRING" id="9913.ENSBTAP00000001976"/>
<dbReference type="PaxDb" id="9913-ENSBTAP00000001976"/>
<dbReference type="GeneID" id="528315"/>
<dbReference type="KEGG" id="bta:528315"/>
<dbReference type="CTD" id="57630"/>
<dbReference type="VEuPathDB" id="HostDB:ENSBTAG00000001508"/>
<dbReference type="eggNOG" id="KOG2177">
    <property type="taxonomic scope" value="Eukaryota"/>
</dbReference>
<dbReference type="HOGENOM" id="CLU_015769_1_0_1"/>
<dbReference type="InParanoid" id="A5D7F8"/>
<dbReference type="OMA" id="HKQRRFL"/>
<dbReference type="OrthoDB" id="19092at2759"/>
<dbReference type="Reactome" id="R-BTA-9013424">
    <property type="pathway name" value="RHOV GTPase cycle"/>
</dbReference>
<dbReference type="Reactome" id="R-BTA-983168">
    <property type="pathway name" value="Antigen processing: Ubiquitination &amp; Proteasome degradation"/>
</dbReference>
<dbReference type="UniPathway" id="UPA00143"/>
<dbReference type="Proteomes" id="UP000009136">
    <property type="component" value="Chromosome 8"/>
</dbReference>
<dbReference type="Bgee" id="ENSBTAG00000001508">
    <property type="expression patterns" value="Expressed in ruminant reticulum and 102 other cell types or tissues"/>
</dbReference>
<dbReference type="GO" id="GO:0005829">
    <property type="term" value="C:cytosol"/>
    <property type="evidence" value="ECO:0000318"/>
    <property type="project" value="GO_Central"/>
</dbReference>
<dbReference type="GO" id="GO:0005794">
    <property type="term" value="C:Golgi apparatus"/>
    <property type="evidence" value="ECO:0007669"/>
    <property type="project" value="UniProtKB-SubCell"/>
</dbReference>
<dbReference type="GO" id="GO:0030027">
    <property type="term" value="C:lamellipodium"/>
    <property type="evidence" value="ECO:0000250"/>
    <property type="project" value="UniProtKB"/>
</dbReference>
<dbReference type="GO" id="GO:0048471">
    <property type="term" value="C:perinuclear region of cytoplasm"/>
    <property type="evidence" value="ECO:0007669"/>
    <property type="project" value="UniProtKB-SubCell"/>
</dbReference>
<dbReference type="GO" id="GO:0005078">
    <property type="term" value="F:MAP-kinase scaffold activity"/>
    <property type="evidence" value="ECO:0000250"/>
    <property type="project" value="UniProtKB"/>
</dbReference>
<dbReference type="GO" id="GO:0061630">
    <property type="term" value="F:ubiquitin protein ligase activity"/>
    <property type="evidence" value="ECO:0000250"/>
    <property type="project" value="UniProtKB"/>
</dbReference>
<dbReference type="GO" id="GO:0008270">
    <property type="term" value="F:zinc ion binding"/>
    <property type="evidence" value="ECO:0007669"/>
    <property type="project" value="UniProtKB-KW"/>
</dbReference>
<dbReference type="GO" id="GO:0043066">
    <property type="term" value="P:negative regulation of apoptotic process"/>
    <property type="evidence" value="ECO:0000318"/>
    <property type="project" value="GO_Central"/>
</dbReference>
<dbReference type="GO" id="GO:0001764">
    <property type="term" value="P:neuron migration"/>
    <property type="evidence" value="ECO:0000250"/>
    <property type="project" value="UniProtKB"/>
</dbReference>
<dbReference type="GO" id="GO:0046330">
    <property type="term" value="P:positive regulation of JNK cascade"/>
    <property type="evidence" value="ECO:0000250"/>
    <property type="project" value="UniProtKB"/>
</dbReference>
<dbReference type="GO" id="GO:0032436">
    <property type="term" value="P:positive regulation of proteasomal ubiquitin-dependent protein catabolic process"/>
    <property type="evidence" value="ECO:0000318"/>
    <property type="project" value="GO_Central"/>
</dbReference>
<dbReference type="GO" id="GO:0051865">
    <property type="term" value="P:protein autoubiquitination"/>
    <property type="evidence" value="ECO:0000250"/>
    <property type="project" value="UniProtKB"/>
</dbReference>
<dbReference type="GO" id="GO:0016567">
    <property type="term" value="P:protein ubiquitination"/>
    <property type="evidence" value="ECO:0000318"/>
    <property type="project" value="GO_Central"/>
</dbReference>
<dbReference type="GO" id="GO:0043370">
    <property type="term" value="P:regulation of CD4-positive, alpha-beta T cell differentiation"/>
    <property type="evidence" value="ECO:0000250"/>
    <property type="project" value="UniProtKB"/>
</dbReference>
<dbReference type="GO" id="GO:2000564">
    <property type="term" value="P:regulation of CD8-positive, alpha-beta T cell proliferation"/>
    <property type="evidence" value="ECO:0000250"/>
    <property type="project" value="UniProtKB"/>
</dbReference>
<dbReference type="CDD" id="cd16748">
    <property type="entry name" value="RING-HC_SH3RF1"/>
    <property type="match status" value="1"/>
</dbReference>
<dbReference type="CDD" id="cd11930">
    <property type="entry name" value="SH3_SH3RF1_2"/>
    <property type="match status" value="1"/>
</dbReference>
<dbReference type="CDD" id="cd11785">
    <property type="entry name" value="SH3_SH3RF_C"/>
    <property type="match status" value="1"/>
</dbReference>
<dbReference type="FunFam" id="3.30.40.10:FF:000077">
    <property type="entry name" value="E3 ubiquitin-protein ligase SH3RF1 isoform X1"/>
    <property type="match status" value="1"/>
</dbReference>
<dbReference type="FunFam" id="2.30.30.40:FF:000063">
    <property type="entry name" value="Putative E3 ubiquitin-protein ligase SH3RF1"/>
    <property type="match status" value="1"/>
</dbReference>
<dbReference type="FunFam" id="2.30.30.40:FF:000091">
    <property type="entry name" value="Putative E3 ubiquitin-protein ligase SH3RF1"/>
    <property type="match status" value="1"/>
</dbReference>
<dbReference type="FunFam" id="2.30.30.40:FF:000118">
    <property type="entry name" value="Putative E3 ubiquitin-protein ligase SH3RF1"/>
    <property type="match status" value="1"/>
</dbReference>
<dbReference type="FunFam" id="2.30.30.40:FF:000001">
    <property type="entry name" value="Sorbin and SH3 domain-containing protein 1 isoform 2"/>
    <property type="match status" value="1"/>
</dbReference>
<dbReference type="Gene3D" id="2.30.30.40">
    <property type="entry name" value="SH3 Domains"/>
    <property type="match status" value="4"/>
</dbReference>
<dbReference type="Gene3D" id="3.30.40.10">
    <property type="entry name" value="Zinc/RING finger domain, C3HC4 (zinc finger)"/>
    <property type="match status" value="1"/>
</dbReference>
<dbReference type="InterPro" id="IPR050384">
    <property type="entry name" value="Endophilin_SH3RF"/>
</dbReference>
<dbReference type="InterPro" id="IPR036028">
    <property type="entry name" value="SH3-like_dom_sf"/>
</dbReference>
<dbReference type="InterPro" id="IPR001452">
    <property type="entry name" value="SH3_domain"/>
</dbReference>
<dbReference type="InterPro" id="IPR035816">
    <property type="entry name" value="SH3RF1/SH3RF3_SH3_4"/>
</dbReference>
<dbReference type="InterPro" id="IPR035795">
    <property type="entry name" value="SH3RF1_SH3_2"/>
</dbReference>
<dbReference type="InterPro" id="IPR001841">
    <property type="entry name" value="Znf_RING"/>
</dbReference>
<dbReference type="InterPro" id="IPR013083">
    <property type="entry name" value="Znf_RING/FYVE/PHD"/>
</dbReference>
<dbReference type="InterPro" id="IPR017907">
    <property type="entry name" value="Znf_RING_CS"/>
</dbReference>
<dbReference type="PANTHER" id="PTHR14167:SF81">
    <property type="entry name" value="ENDOPHILIN-A"/>
    <property type="match status" value="1"/>
</dbReference>
<dbReference type="PANTHER" id="PTHR14167">
    <property type="entry name" value="SH3 DOMAIN-CONTAINING"/>
    <property type="match status" value="1"/>
</dbReference>
<dbReference type="Pfam" id="PF00018">
    <property type="entry name" value="SH3_1"/>
    <property type="match status" value="1"/>
</dbReference>
<dbReference type="Pfam" id="PF07653">
    <property type="entry name" value="SH3_2"/>
    <property type="match status" value="1"/>
</dbReference>
<dbReference type="Pfam" id="PF14604">
    <property type="entry name" value="SH3_9"/>
    <property type="match status" value="2"/>
</dbReference>
<dbReference type="Pfam" id="PF13923">
    <property type="entry name" value="zf-C3HC4_2"/>
    <property type="match status" value="1"/>
</dbReference>
<dbReference type="PRINTS" id="PR00499">
    <property type="entry name" value="P67PHOX"/>
</dbReference>
<dbReference type="PRINTS" id="PR00452">
    <property type="entry name" value="SH3DOMAIN"/>
</dbReference>
<dbReference type="SMART" id="SM00184">
    <property type="entry name" value="RING"/>
    <property type="match status" value="1"/>
</dbReference>
<dbReference type="SMART" id="SM00326">
    <property type="entry name" value="SH3"/>
    <property type="match status" value="4"/>
</dbReference>
<dbReference type="SUPFAM" id="SSF57850">
    <property type="entry name" value="RING/U-box"/>
    <property type="match status" value="1"/>
</dbReference>
<dbReference type="SUPFAM" id="SSF50044">
    <property type="entry name" value="SH3-domain"/>
    <property type="match status" value="4"/>
</dbReference>
<dbReference type="PROSITE" id="PS50002">
    <property type="entry name" value="SH3"/>
    <property type="match status" value="4"/>
</dbReference>
<dbReference type="PROSITE" id="PS00518">
    <property type="entry name" value="ZF_RING_1"/>
    <property type="match status" value="1"/>
</dbReference>
<dbReference type="PROSITE" id="PS50089">
    <property type="entry name" value="ZF_RING_2"/>
    <property type="match status" value="1"/>
</dbReference>
<gene>
    <name type="primary">SH3RF1</name>
    <name type="synonym">POSH</name>
    <name evidence="4" type="synonym">POSH1</name>
</gene>
<accession>A5D7F8</accession>
<protein>
    <recommendedName>
        <fullName>E3 ubiquitin-protein ligase SH3RF1</fullName>
        <ecNumber evidence="4">2.3.2.27</ecNumber>
    </recommendedName>
    <alternativeName>
        <fullName>Plenty of SH3s</fullName>
        <shortName>Protein POSH</shortName>
    </alternativeName>
    <alternativeName>
        <fullName evidence="8">RING-type E3 ubiquitin transferase SH3RF1</fullName>
    </alternativeName>
    <alternativeName>
        <fullName>SH3 domain-containing RING finger protein 1</fullName>
    </alternativeName>
</protein>
<keyword id="KW-0966">Cell projection</keyword>
<keyword id="KW-0963">Cytoplasm</keyword>
<keyword id="KW-0333">Golgi apparatus</keyword>
<keyword id="KW-0479">Metal-binding</keyword>
<keyword id="KW-0597">Phosphoprotein</keyword>
<keyword id="KW-1185">Reference proteome</keyword>
<keyword id="KW-0677">Repeat</keyword>
<keyword id="KW-0728">SH3 domain</keyword>
<keyword id="KW-0808">Transferase</keyword>
<keyword id="KW-0832">Ubl conjugation</keyword>
<keyword id="KW-0833">Ubl conjugation pathway</keyword>
<keyword id="KW-0862">Zinc</keyword>
<keyword id="KW-0863">Zinc-finger</keyword>